<reference key="1">
    <citation type="journal article" date="2007" name="BMC Microbiol.">
        <title>Subtle genetic changes enhance virulence of methicillin resistant and sensitive Staphylococcus aureus.</title>
        <authorList>
            <person name="Highlander S.K."/>
            <person name="Hulten K.G."/>
            <person name="Qin X."/>
            <person name="Jiang H."/>
            <person name="Yerrapragada S."/>
            <person name="Mason E.O. Jr."/>
            <person name="Shang Y."/>
            <person name="Williams T.M."/>
            <person name="Fortunov R.M."/>
            <person name="Liu Y."/>
            <person name="Igboeli O."/>
            <person name="Petrosino J."/>
            <person name="Tirumalai M."/>
            <person name="Uzman A."/>
            <person name="Fox G.E."/>
            <person name="Cardenas A.M."/>
            <person name="Muzny D.M."/>
            <person name="Hemphill L."/>
            <person name="Ding Y."/>
            <person name="Dugan S."/>
            <person name="Blyth P.R."/>
            <person name="Buhay C.J."/>
            <person name="Dinh H.H."/>
            <person name="Hawes A.C."/>
            <person name="Holder M."/>
            <person name="Kovar C.L."/>
            <person name="Lee S.L."/>
            <person name="Liu W."/>
            <person name="Nazareth L.V."/>
            <person name="Wang Q."/>
            <person name="Zhou J."/>
            <person name="Kaplan S.L."/>
            <person name="Weinstock G.M."/>
        </authorList>
    </citation>
    <scope>NUCLEOTIDE SEQUENCE [LARGE SCALE GENOMIC DNA]</scope>
    <source>
        <strain>USA300 / TCH1516</strain>
    </source>
</reference>
<feature type="chain" id="PRO_0000372147" description="Na(+)/H(+) antiporter subunit E1">
    <location>
        <begin position="1"/>
        <end position="159"/>
    </location>
</feature>
<feature type="transmembrane region" description="Helical" evidence="2">
    <location>
        <begin position="1"/>
        <end position="21"/>
    </location>
</feature>
<feature type="transmembrane region" description="Helical" evidence="2">
    <location>
        <begin position="27"/>
        <end position="47"/>
    </location>
</feature>
<feature type="transmembrane region" description="Helical" evidence="2">
    <location>
        <begin position="49"/>
        <end position="69"/>
    </location>
</feature>
<feature type="transmembrane region" description="Helical" evidence="2">
    <location>
        <begin position="101"/>
        <end position="121"/>
    </location>
</feature>
<accession>A8Z055</accession>
<dbReference type="EMBL" id="CP000730">
    <property type="protein sequence ID" value="ABX28929.1"/>
    <property type="molecule type" value="Genomic_DNA"/>
</dbReference>
<dbReference type="RefSeq" id="WP_000290674.1">
    <property type="nucleotide sequence ID" value="NC_010079.1"/>
</dbReference>
<dbReference type="SMR" id="A8Z055"/>
<dbReference type="KEGG" id="sax:USA300HOU_0908"/>
<dbReference type="HOGENOM" id="CLU_086615_3_2_9"/>
<dbReference type="GO" id="GO:0005886">
    <property type="term" value="C:plasma membrane"/>
    <property type="evidence" value="ECO:0007669"/>
    <property type="project" value="UniProtKB-SubCell"/>
</dbReference>
<dbReference type="GO" id="GO:0015297">
    <property type="term" value="F:antiporter activity"/>
    <property type="evidence" value="ECO:0007669"/>
    <property type="project" value="UniProtKB-KW"/>
</dbReference>
<dbReference type="GO" id="GO:0008324">
    <property type="term" value="F:monoatomic cation transmembrane transporter activity"/>
    <property type="evidence" value="ECO:0007669"/>
    <property type="project" value="InterPro"/>
</dbReference>
<dbReference type="GO" id="GO:1902600">
    <property type="term" value="P:proton transmembrane transport"/>
    <property type="evidence" value="ECO:0007669"/>
    <property type="project" value="UniProtKB-KW"/>
</dbReference>
<dbReference type="GO" id="GO:0006814">
    <property type="term" value="P:sodium ion transport"/>
    <property type="evidence" value="ECO:0007669"/>
    <property type="project" value="UniProtKB-KW"/>
</dbReference>
<dbReference type="InterPro" id="IPR004847">
    <property type="entry name" value="Antiport_suE1"/>
</dbReference>
<dbReference type="InterPro" id="IPR002758">
    <property type="entry name" value="Cation_antiport_E"/>
</dbReference>
<dbReference type="NCBIfam" id="TIGR00942">
    <property type="entry name" value="2a6301s05"/>
    <property type="match status" value="1"/>
</dbReference>
<dbReference type="NCBIfam" id="NF009291">
    <property type="entry name" value="PRK12651.1-1"/>
    <property type="match status" value="1"/>
</dbReference>
<dbReference type="PANTHER" id="PTHR34584">
    <property type="entry name" value="NA(+)/H(+) ANTIPORTER SUBUNIT E1"/>
    <property type="match status" value="1"/>
</dbReference>
<dbReference type="PANTHER" id="PTHR34584:SF1">
    <property type="entry name" value="NA(+)_H(+) ANTIPORTER SUBUNIT E1"/>
    <property type="match status" value="1"/>
</dbReference>
<dbReference type="Pfam" id="PF01899">
    <property type="entry name" value="MNHE"/>
    <property type="match status" value="1"/>
</dbReference>
<dbReference type="PIRSF" id="PIRSF019239">
    <property type="entry name" value="MrpE"/>
    <property type="match status" value="1"/>
</dbReference>
<organism>
    <name type="scientific">Staphylococcus aureus (strain USA300 / TCH1516)</name>
    <dbReference type="NCBI Taxonomy" id="451516"/>
    <lineage>
        <taxon>Bacteria</taxon>
        <taxon>Bacillati</taxon>
        <taxon>Bacillota</taxon>
        <taxon>Bacilli</taxon>
        <taxon>Bacillales</taxon>
        <taxon>Staphylococcaceae</taxon>
        <taxon>Staphylococcus</taxon>
    </lineage>
</organism>
<comment type="function">
    <text evidence="1">Mnh complex is a Na(+)/H(+) antiporter involved in Na(+) excretion.</text>
</comment>
<comment type="subunit">
    <text evidence="1">May form a heterooligomeric complex that consists of seven subunits: mnhA1, mnhB1, mnhC1, mnhD1, mnhE1, mnhF1 and mnhG1.</text>
</comment>
<comment type="subcellular location">
    <subcellularLocation>
        <location evidence="3">Cell membrane</location>
        <topology evidence="3">Multi-pass membrane protein</topology>
    </subcellularLocation>
</comment>
<comment type="similarity">
    <text evidence="3">Belongs to the CPA3 antiporters (TC 2.A.63) subunit E family.</text>
</comment>
<evidence type="ECO:0000250" key="1"/>
<evidence type="ECO:0000255" key="2"/>
<evidence type="ECO:0000305" key="3"/>
<proteinExistence type="inferred from homology"/>
<sequence>MAVQLVLNFIIAVFWLFVTNSYTTNNFVLGFIFGLVLVYLLHRVLPGRFYVITLYRIIKLVIIFLIELIKANFDVLKIIIKPSIKNEPGFFVYHTDLKKDWQIVLLSNLITLTPGTVVLGVSDDRTKIYIHAIDFSTKEQEVESIKTSLEKIVREVGEI</sequence>
<protein>
    <recommendedName>
        <fullName>Na(+)/H(+) antiporter subunit E1</fullName>
    </recommendedName>
    <alternativeName>
        <fullName>Mnh complex subunit E1</fullName>
    </alternativeName>
</protein>
<name>MNHE1_STAAT</name>
<keyword id="KW-0050">Antiport</keyword>
<keyword id="KW-1003">Cell membrane</keyword>
<keyword id="KW-0375">Hydrogen ion transport</keyword>
<keyword id="KW-0406">Ion transport</keyword>
<keyword id="KW-0472">Membrane</keyword>
<keyword id="KW-0915">Sodium</keyword>
<keyword id="KW-0739">Sodium transport</keyword>
<keyword id="KW-0812">Transmembrane</keyword>
<keyword id="KW-1133">Transmembrane helix</keyword>
<keyword id="KW-0813">Transport</keyword>
<gene>
    <name type="primary">mnhE1</name>
    <name type="ordered locus">USA300HOU_0908</name>
</gene>